<keyword id="KW-0342">GTP-binding</keyword>
<keyword id="KW-0547">Nucleotide-binding</keyword>
<keyword id="KW-0677">Repeat</keyword>
<keyword id="KW-0690">Ribosome biogenesis</keyword>
<sequence>MIPIIALIGRPNVGKSTFFNRLTQTANALVADFPGLTRDRQYGHAEIENHKFIIIDTGGINGIEGIENIQKHMTHQSFLAIEEADVVLFILDARAGLLPADLEIAKHLRKRKKATFLVANKIDGMNSDTALTDFYSLALGKVYGIAASHGRGVAQLMSSVITPFVPEKPIIELSEEELNSSYWEKQKTEVDKTDFLESKKFLCNPESLPIKLAIVGRPNVGKSTLVNHILAQDRMLVYDIPGTTRDSIYIPLIRNNREYIFIDTAGVRKSAKIKEKVERFSVIKTLKAIENANVVLLVIDANEGVSDQDLSLLSFILNSGRSLVITVNKWDAISSEKRKQIKNSLDLRLGFMDFARTHFISALHGSGVENLFKSIKEAYDCSTKRINTSLLTRIMQLAKEEHEPPLVRGRRVKLKYAHSGGYNPLIVVIHGNQVTAINDSYKRYLMNYFRRSLKIIGAPIRIQFKESENPFASKRNTLTPNQVRKRKRLITHLKKR</sequence>
<dbReference type="EMBL" id="CP001277">
    <property type="protein sequence ID" value="ACQ67485.1"/>
    <property type="molecule type" value="Genomic_DNA"/>
</dbReference>
<dbReference type="RefSeq" id="WP_015873305.1">
    <property type="nucleotide sequence ID" value="NC_012751.1"/>
</dbReference>
<dbReference type="SMR" id="C4K4J2"/>
<dbReference type="STRING" id="572265.HDEF_0756"/>
<dbReference type="GeneID" id="66260604"/>
<dbReference type="KEGG" id="hde:HDEF_0756"/>
<dbReference type="eggNOG" id="COG1160">
    <property type="taxonomic scope" value="Bacteria"/>
</dbReference>
<dbReference type="HOGENOM" id="CLU_016077_5_1_6"/>
<dbReference type="Proteomes" id="UP000002334">
    <property type="component" value="Chromosome"/>
</dbReference>
<dbReference type="GO" id="GO:0005525">
    <property type="term" value="F:GTP binding"/>
    <property type="evidence" value="ECO:0007669"/>
    <property type="project" value="UniProtKB-UniRule"/>
</dbReference>
<dbReference type="GO" id="GO:0043022">
    <property type="term" value="F:ribosome binding"/>
    <property type="evidence" value="ECO:0007669"/>
    <property type="project" value="TreeGrafter"/>
</dbReference>
<dbReference type="GO" id="GO:0042254">
    <property type="term" value="P:ribosome biogenesis"/>
    <property type="evidence" value="ECO:0007669"/>
    <property type="project" value="UniProtKB-KW"/>
</dbReference>
<dbReference type="CDD" id="cd01894">
    <property type="entry name" value="EngA1"/>
    <property type="match status" value="1"/>
</dbReference>
<dbReference type="CDD" id="cd01895">
    <property type="entry name" value="EngA2"/>
    <property type="match status" value="1"/>
</dbReference>
<dbReference type="FunFam" id="3.30.300.20:FF:000004">
    <property type="entry name" value="GTPase Der"/>
    <property type="match status" value="1"/>
</dbReference>
<dbReference type="FunFam" id="3.40.50.300:FF:000040">
    <property type="entry name" value="GTPase Der"/>
    <property type="match status" value="1"/>
</dbReference>
<dbReference type="FunFam" id="3.40.50.300:FF:000057">
    <property type="entry name" value="GTPase Der"/>
    <property type="match status" value="1"/>
</dbReference>
<dbReference type="Gene3D" id="3.30.300.20">
    <property type="match status" value="1"/>
</dbReference>
<dbReference type="Gene3D" id="3.40.50.300">
    <property type="entry name" value="P-loop containing nucleotide triphosphate hydrolases"/>
    <property type="match status" value="2"/>
</dbReference>
<dbReference type="HAMAP" id="MF_00195">
    <property type="entry name" value="GTPase_Der"/>
    <property type="match status" value="1"/>
</dbReference>
<dbReference type="InterPro" id="IPR031166">
    <property type="entry name" value="G_ENGA"/>
</dbReference>
<dbReference type="InterPro" id="IPR006073">
    <property type="entry name" value="GTP-bd"/>
</dbReference>
<dbReference type="InterPro" id="IPR016484">
    <property type="entry name" value="GTPase_Der"/>
</dbReference>
<dbReference type="InterPro" id="IPR032859">
    <property type="entry name" value="KH_dom-like"/>
</dbReference>
<dbReference type="InterPro" id="IPR015946">
    <property type="entry name" value="KH_dom-like_a/b"/>
</dbReference>
<dbReference type="InterPro" id="IPR027417">
    <property type="entry name" value="P-loop_NTPase"/>
</dbReference>
<dbReference type="InterPro" id="IPR005225">
    <property type="entry name" value="Small_GTP-bd"/>
</dbReference>
<dbReference type="NCBIfam" id="TIGR03594">
    <property type="entry name" value="GTPase_EngA"/>
    <property type="match status" value="1"/>
</dbReference>
<dbReference type="NCBIfam" id="TIGR00231">
    <property type="entry name" value="small_GTP"/>
    <property type="match status" value="2"/>
</dbReference>
<dbReference type="PANTHER" id="PTHR43834">
    <property type="entry name" value="GTPASE DER"/>
    <property type="match status" value="1"/>
</dbReference>
<dbReference type="PANTHER" id="PTHR43834:SF6">
    <property type="entry name" value="GTPASE DER"/>
    <property type="match status" value="1"/>
</dbReference>
<dbReference type="Pfam" id="PF14714">
    <property type="entry name" value="KH_dom-like"/>
    <property type="match status" value="1"/>
</dbReference>
<dbReference type="Pfam" id="PF01926">
    <property type="entry name" value="MMR_HSR1"/>
    <property type="match status" value="2"/>
</dbReference>
<dbReference type="PIRSF" id="PIRSF006485">
    <property type="entry name" value="GTP-binding_EngA"/>
    <property type="match status" value="1"/>
</dbReference>
<dbReference type="PRINTS" id="PR00326">
    <property type="entry name" value="GTP1OBG"/>
</dbReference>
<dbReference type="SUPFAM" id="SSF52540">
    <property type="entry name" value="P-loop containing nucleoside triphosphate hydrolases"/>
    <property type="match status" value="2"/>
</dbReference>
<dbReference type="PROSITE" id="PS51712">
    <property type="entry name" value="G_ENGA"/>
    <property type="match status" value="2"/>
</dbReference>
<gene>
    <name evidence="1" type="primary">der</name>
    <name type="synonym">engA</name>
    <name type="ordered locus">HDEF_0756</name>
</gene>
<name>DER_HAMD5</name>
<comment type="function">
    <text evidence="1">GTPase that plays an essential role in the late steps of ribosome biogenesis.</text>
</comment>
<comment type="subunit">
    <text evidence="1">Associates with the 50S ribosomal subunit.</text>
</comment>
<comment type="similarity">
    <text evidence="1">Belongs to the TRAFAC class TrmE-Era-EngA-EngB-Septin-like GTPase superfamily. EngA (Der) GTPase family.</text>
</comment>
<evidence type="ECO:0000255" key="1">
    <source>
        <dbReference type="HAMAP-Rule" id="MF_00195"/>
    </source>
</evidence>
<reference key="1">
    <citation type="journal article" date="2009" name="Proc. Natl. Acad. Sci. U.S.A.">
        <title>Hamiltonella defensa, genome evolution of protective bacterial endosymbiont from pathogenic ancestors.</title>
        <authorList>
            <person name="Degnan P.H."/>
            <person name="Yu Y."/>
            <person name="Sisneros N."/>
            <person name="Wing R.A."/>
            <person name="Moran N.A."/>
        </authorList>
    </citation>
    <scope>NUCLEOTIDE SEQUENCE [LARGE SCALE GENOMIC DNA]</scope>
    <source>
        <strain>5AT</strain>
    </source>
</reference>
<organism>
    <name type="scientific">Hamiltonella defensa subsp. Acyrthosiphon pisum (strain 5AT)</name>
    <dbReference type="NCBI Taxonomy" id="572265"/>
    <lineage>
        <taxon>Bacteria</taxon>
        <taxon>Pseudomonadati</taxon>
        <taxon>Pseudomonadota</taxon>
        <taxon>Gammaproteobacteria</taxon>
        <taxon>Enterobacterales</taxon>
        <taxon>Enterobacteriaceae</taxon>
        <taxon>aphid secondary symbionts</taxon>
        <taxon>Candidatus Hamiltonella</taxon>
    </lineage>
</organism>
<protein>
    <recommendedName>
        <fullName evidence="1">GTPase Der</fullName>
    </recommendedName>
    <alternativeName>
        <fullName evidence="1">GTP-binding protein EngA</fullName>
    </alternativeName>
</protein>
<feature type="chain" id="PRO_1000204042" description="GTPase Der">
    <location>
        <begin position="1"/>
        <end position="496"/>
    </location>
</feature>
<feature type="domain" description="EngA-type G 1">
    <location>
        <begin position="3"/>
        <end position="168"/>
    </location>
</feature>
<feature type="domain" description="EngA-type G 2">
    <location>
        <begin position="210"/>
        <end position="383"/>
    </location>
</feature>
<feature type="domain" description="KH-like" evidence="1">
    <location>
        <begin position="384"/>
        <end position="468"/>
    </location>
</feature>
<feature type="binding site" evidence="1">
    <location>
        <begin position="9"/>
        <end position="16"/>
    </location>
    <ligand>
        <name>GTP</name>
        <dbReference type="ChEBI" id="CHEBI:37565"/>
        <label>1</label>
    </ligand>
</feature>
<feature type="binding site" evidence="1">
    <location>
        <begin position="56"/>
        <end position="60"/>
    </location>
    <ligand>
        <name>GTP</name>
        <dbReference type="ChEBI" id="CHEBI:37565"/>
        <label>1</label>
    </ligand>
</feature>
<feature type="binding site" evidence="1">
    <location>
        <begin position="120"/>
        <end position="123"/>
    </location>
    <ligand>
        <name>GTP</name>
        <dbReference type="ChEBI" id="CHEBI:37565"/>
        <label>1</label>
    </ligand>
</feature>
<feature type="binding site" evidence="1">
    <location>
        <begin position="216"/>
        <end position="223"/>
    </location>
    <ligand>
        <name>GTP</name>
        <dbReference type="ChEBI" id="CHEBI:37565"/>
        <label>2</label>
    </ligand>
</feature>
<feature type="binding site" evidence="1">
    <location>
        <begin position="263"/>
        <end position="267"/>
    </location>
    <ligand>
        <name>GTP</name>
        <dbReference type="ChEBI" id="CHEBI:37565"/>
        <label>2</label>
    </ligand>
</feature>
<feature type="binding site" evidence="1">
    <location>
        <begin position="328"/>
        <end position="331"/>
    </location>
    <ligand>
        <name>GTP</name>
        <dbReference type="ChEBI" id="CHEBI:37565"/>
        <label>2</label>
    </ligand>
</feature>
<accession>C4K4J2</accession>
<proteinExistence type="inferred from homology"/>